<keyword id="KW-0030">Aminoacyl-tRNA synthetase</keyword>
<keyword id="KW-0067">ATP-binding</keyword>
<keyword id="KW-0963">Cytoplasm</keyword>
<keyword id="KW-0436">Ligase</keyword>
<keyword id="KW-0479">Metal-binding</keyword>
<keyword id="KW-0547">Nucleotide-binding</keyword>
<keyword id="KW-0648">Protein biosynthesis</keyword>
<keyword id="KW-1185">Reference proteome</keyword>
<keyword id="KW-0862">Zinc</keyword>
<dbReference type="EC" id="6.1.1.5" evidence="1"/>
<dbReference type="EMBL" id="AM406670">
    <property type="protein sequence ID" value="CAL93822.1"/>
    <property type="molecule type" value="Genomic_DNA"/>
</dbReference>
<dbReference type="RefSeq" id="WP_011764938.1">
    <property type="nucleotide sequence ID" value="NC_008702.1"/>
</dbReference>
<dbReference type="SMR" id="A1K4R7"/>
<dbReference type="STRING" id="62928.azo1205"/>
<dbReference type="KEGG" id="azo:azo1205"/>
<dbReference type="eggNOG" id="COG0060">
    <property type="taxonomic scope" value="Bacteria"/>
</dbReference>
<dbReference type="HOGENOM" id="CLU_001493_7_1_4"/>
<dbReference type="Proteomes" id="UP000002588">
    <property type="component" value="Chromosome"/>
</dbReference>
<dbReference type="GO" id="GO:0005829">
    <property type="term" value="C:cytosol"/>
    <property type="evidence" value="ECO:0007669"/>
    <property type="project" value="TreeGrafter"/>
</dbReference>
<dbReference type="GO" id="GO:0002161">
    <property type="term" value="F:aminoacyl-tRNA deacylase activity"/>
    <property type="evidence" value="ECO:0007669"/>
    <property type="project" value="InterPro"/>
</dbReference>
<dbReference type="GO" id="GO:0005524">
    <property type="term" value="F:ATP binding"/>
    <property type="evidence" value="ECO:0007669"/>
    <property type="project" value="UniProtKB-UniRule"/>
</dbReference>
<dbReference type="GO" id="GO:0004822">
    <property type="term" value="F:isoleucine-tRNA ligase activity"/>
    <property type="evidence" value="ECO:0007669"/>
    <property type="project" value="UniProtKB-UniRule"/>
</dbReference>
<dbReference type="GO" id="GO:0000049">
    <property type="term" value="F:tRNA binding"/>
    <property type="evidence" value="ECO:0007669"/>
    <property type="project" value="InterPro"/>
</dbReference>
<dbReference type="GO" id="GO:0008270">
    <property type="term" value="F:zinc ion binding"/>
    <property type="evidence" value="ECO:0007669"/>
    <property type="project" value="UniProtKB-UniRule"/>
</dbReference>
<dbReference type="GO" id="GO:0006428">
    <property type="term" value="P:isoleucyl-tRNA aminoacylation"/>
    <property type="evidence" value="ECO:0007669"/>
    <property type="project" value="UniProtKB-UniRule"/>
</dbReference>
<dbReference type="CDD" id="cd07960">
    <property type="entry name" value="Anticodon_Ia_Ile_BEm"/>
    <property type="match status" value="1"/>
</dbReference>
<dbReference type="CDD" id="cd00818">
    <property type="entry name" value="IleRS_core"/>
    <property type="match status" value="1"/>
</dbReference>
<dbReference type="FunFam" id="3.40.50.620:FF:000042">
    <property type="entry name" value="Isoleucine--tRNA ligase"/>
    <property type="match status" value="1"/>
</dbReference>
<dbReference type="FunFam" id="3.40.50.620:FF:000048">
    <property type="entry name" value="Isoleucine--tRNA ligase"/>
    <property type="match status" value="1"/>
</dbReference>
<dbReference type="Gene3D" id="1.10.730.20">
    <property type="match status" value="1"/>
</dbReference>
<dbReference type="Gene3D" id="3.40.50.620">
    <property type="entry name" value="HUPs"/>
    <property type="match status" value="2"/>
</dbReference>
<dbReference type="Gene3D" id="1.10.10.830">
    <property type="entry name" value="Ile-tRNA synthetase CP2 domain-like"/>
    <property type="match status" value="1"/>
</dbReference>
<dbReference type="Gene3D" id="3.90.740.10">
    <property type="entry name" value="Valyl/Leucyl/Isoleucyl-tRNA synthetase, editing domain"/>
    <property type="match status" value="1"/>
</dbReference>
<dbReference type="HAMAP" id="MF_02002">
    <property type="entry name" value="Ile_tRNA_synth_type1"/>
    <property type="match status" value="1"/>
</dbReference>
<dbReference type="InterPro" id="IPR001412">
    <property type="entry name" value="aa-tRNA-synth_I_CS"/>
</dbReference>
<dbReference type="InterPro" id="IPR002300">
    <property type="entry name" value="aa-tRNA-synth_Ia"/>
</dbReference>
<dbReference type="InterPro" id="IPR033708">
    <property type="entry name" value="Anticodon_Ile_BEm"/>
</dbReference>
<dbReference type="InterPro" id="IPR002301">
    <property type="entry name" value="Ile-tRNA-ligase"/>
</dbReference>
<dbReference type="InterPro" id="IPR023585">
    <property type="entry name" value="Ile-tRNA-ligase_type1"/>
</dbReference>
<dbReference type="InterPro" id="IPR050081">
    <property type="entry name" value="Ile-tRNA_ligase"/>
</dbReference>
<dbReference type="InterPro" id="IPR013155">
    <property type="entry name" value="M/V/L/I-tRNA-synth_anticd-bd"/>
</dbReference>
<dbReference type="InterPro" id="IPR014729">
    <property type="entry name" value="Rossmann-like_a/b/a_fold"/>
</dbReference>
<dbReference type="InterPro" id="IPR009080">
    <property type="entry name" value="tRNAsynth_Ia_anticodon-bd"/>
</dbReference>
<dbReference type="InterPro" id="IPR009008">
    <property type="entry name" value="Val/Leu/Ile-tRNA-synth_edit"/>
</dbReference>
<dbReference type="InterPro" id="IPR010663">
    <property type="entry name" value="Znf_FPG/IleRS"/>
</dbReference>
<dbReference type="NCBIfam" id="TIGR00392">
    <property type="entry name" value="ileS"/>
    <property type="match status" value="1"/>
</dbReference>
<dbReference type="PANTHER" id="PTHR42765:SF1">
    <property type="entry name" value="ISOLEUCINE--TRNA LIGASE, MITOCHONDRIAL"/>
    <property type="match status" value="1"/>
</dbReference>
<dbReference type="PANTHER" id="PTHR42765">
    <property type="entry name" value="SOLEUCYL-TRNA SYNTHETASE"/>
    <property type="match status" value="1"/>
</dbReference>
<dbReference type="Pfam" id="PF08264">
    <property type="entry name" value="Anticodon_1"/>
    <property type="match status" value="1"/>
</dbReference>
<dbReference type="Pfam" id="PF00133">
    <property type="entry name" value="tRNA-synt_1"/>
    <property type="match status" value="1"/>
</dbReference>
<dbReference type="Pfam" id="PF06827">
    <property type="entry name" value="zf-FPG_IleRS"/>
    <property type="match status" value="1"/>
</dbReference>
<dbReference type="PRINTS" id="PR00984">
    <property type="entry name" value="TRNASYNTHILE"/>
</dbReference>
<dbReference type="SUPFAM" id="SSF47323">
    <property type="entry name" value="Anticodon-binding domain of a subclass of class I aminoacyl-tRNA synthetases"/>
    <property type="match status" value="1"/>
</dbReference>
<dbReference type="SUPFAM" id="SSF52374">
    <property type="entry name" value="Nucleotidylyl transferase"/>
    <property type="match status" value="1"/>
</dbReference>
<dbReference type="SUPFAM" id="SSF50677">
    <property type="entry name" value="ValRS/IleRS/LeuRS editing domain"/>
    <property type="match status" value="1"/>
</dbReference>
<dbReference type="PROSITE" id="PS00178">
    <property type="entry name" value="AA_TRNA_LIGASE_I"/>
    <property type="match status" value="1"/>
</dbReference>
<evidence type="ECO:0000255" key="1">
    <source>
        <dbReference type="HAMAP-Rule" id="MF_02002"/>
    </source>
</evidence>
<protein>
    <recommendedName>
        <fullName evidence="1">Isoleucine--tRNA ligase</fullName>
        <ecNumber evidence="1">6.1.1.5</ecNumber>
    </recommendedName>
    <alternativeName>
        <fullName evidence="1">Isoleucyl-tRNA synthetase</fullName>
        <shortName evidence="1">IleRS</shortName>
    </alternativeName>
</protein>
<proteinExistence type="inferred from homology"/>
<feature type="chain" id="PRO_1000022041" description="Isoleucine--tRNA ligase">
    <location>
        <begin position="1"/>
        <end position="932"/>
    </location>
</feature>
<feature type="short sequence motif" description="'HIGH' region">
    <location>
        <begin position="58"/>
        <end position="68"/>
    </location>
</feature>
<feature type="short sequence motif" description="'KMSKS' region">
    <location>
        <begin position="608"/>
        <end position="612"/>
    </location>
</feature>
<feature type="binding site" evidence="1">
    <location>
        <position position="567"/>
    </location>
    <ligand>
        <name>L-isoleucyl-5'-AMP</name>
        <dbReference type="ChEBI" id="CHEBI:178002"/>
    </ligand>
</feature>
<feature type="binding site" evidence="1">
    <location>
        <position position="611"/>
    </location>
    <ligand>
        <name>ATP</name>
        <dbReference type="ChEBI" id="CHEBI:30616"/>
    </ligand>
</feature>
<feature type="binding site" evidence="1">
    <location>
        <position position="895"/>
    </location>
    <ligand>
        <name>Zn(2+)</name>
        <dbReference type="ChEBI" id="CHEBI:29105"/>
    </ligand>
</feature>
<feature type="binding site" evidence="1">
    <location>
        <position position="898"/>
    </location>
    <ligand>
        <name>Zn(2+)</name>
        <dbReference type="ChEBI" id="CHEBI:29105"/>
    </ligand>
</feature>
<feature type="binding site" evidence="1">
    <location>
        <position position="915"/>
    </location>
    <ligand>
        <name>Zn(2+)</name>
        <dbReference type="ChEBI" id="CHEBI:29105"/>
    </ligand>
</feature>
<feature type="binding site" evidence="1">
    <location>
        <position position="918"/>
    </location>
    <ligand>
        <name>Zn(2+)</name>
        <dbReference type="ChEBI" id="CHEBI:29105"/>
    </ligand>
</feature>
<organism>
    <name type="scientific">Azoarcus sp. (strain BH72)</name>
    <dbReference type="NCBI Taxonomy" id="418699"/>
    <lineage>
        <taxon>Bacteria</taxon>
        <taxon>Pseudomonadati</taxon>
        <taxon>Pseudomonadota</taxon>
        <taxon>Betaproteobacteria</taxon>
        <taxon>Rhodocyclales</taxon>
        <taxon>Zoogloeaceae</taxon>
        <taxon>Azoarcus</taxon>
    </lineage>
</organism>
<sequence>MADYRKTLNLPDTAFPMRGDLPKREPGWIAAWQQQKLYQKIRKAAAGRPKFVLHDGPPYANGNLHLGHALNKILKDIIVRSKTLAGFDAPYVPGWDCHGLPIEHKVEVTHGKNLPADKVRELCRAYAAEQVEIQKKEFIRLGVLGDWDNPYLTMNFANEAGEVRALAEMVKAGYVFKGLKPVNWCFDCGSALAEAEVEYADKVSPAVDVGFPCAEPDRLADAFGLAPLTKPALAVIWTTTPWTIPANQALNMHPEFDYALVDTGERYLVLAHDLVGACLERYGLNGRIVATCKGAALDRVAFRHPFYDRLSPVFLGDYVTLDAGTGVVHSAPAYGLEDFQSCRANGMQSDDILTPVMGDGRYAPDLPFFGGMNIWKANPEITAKLREVGCLLAEAKITHSYMHCWRHKTPLIYRATAQWFVGMDKPVADGSTLRERALRGVEATRFFPAWGQSRLHAMIANRPDWCISRQRNWGVPIPFFLHKETGELHPRTVELMEEVAKRIEQEGIEAWFKLDAAELLGAEAAQYEKISDTLDVWFDSGTTHWHVLRGSHNDGHVEGPRADLYLEGSDQHRGWFHSSLLTGCAIDGHPPYNALLTHGFTVDQQGRKMSKSLGNTILPQEVSEKMGAEILRLWVASTDYSGELSISKEILDRVVEVYRRVRNTLRFLLANTADFDIAKDAVPLEQWLDIDRYALAFTRQLAQQAEADYARFEFHRIVQALQVFCAEDLGAFYLDILKDRLYTTAAGSQARRAAQTALWHITQTLLKLMAPILSFTAEEAWAVLNPGKEDSVMLHTFHALPAQEGEAGLVARWETIRAVRAEALKVIEALRTEGKVGASLQAELELRLTADKYTAMQSLGEDLRFVTMTSRATLLEAASAEAEAIVATPSARTKCERCWHYTDDVGHNAEHPTLCARCADNLYGAGETRTHA</sequence>
<reference key="1">
    <citation type="journal article" date="2006" name="Nat. Biotechnol.">
        <title>Complete genome of the mutualistic, N2-fixing grass endophyte Azoarcus sp. strain BH72.</title>
        <authorList>
            <person name="Krause A."/>
            <person name="Ramakumar A."/>
            <person name="Bartels D."/>
            <person name="Battistoni F."/>
            <person name="Bekel T."/>
            <person name="Boch J."/>
            <person name="Boehm M."/>
            <person name="Friedrich F."/>
            <person name="Hurek T."/>
            <person name="Krause L."/>
            <person name="Linke B."/>
            <person name="McHardy A.C."/>
            <person name="Sarkar A."/>
            <person name="Schneiker S."/>
            <person name="Syed A.A."/>
            <person name="Thauer R."/>
            <person name="Vorhoelter F.-J."/>
            <person name="Weidner S."/>
            <person name="Puehler A."/>
            <person name="Reinhold-Hurek B."/>
            <person name="Kaiser O."/>
            <person name="Goesmann A."/>
        </authorList>
    </citation>
    <scope>NUCLEOTIDE SEQUENCE [LARGE SCALE GENOMIC DNA]</scope>
    <source>
        <strain>BH72</strain>
    </source>
</reference>
<comment type="function">
    <text evidence="1">Catalyzes the attachment of isoleucine to tRNA(Ile). As IleRS can inadvertently accommodate and process structurally similar amino acids such as valine, to avoid such errors it has two additional distinct tRNA(Ile)-dependent editing activities. One activity is designated as 'pretransfer' editing and involves the hydrolysis of activated Val-AMP. The other activity is designated 'posttransfer' editing and involves deacylation of mischarged Val-tRNA(Ile).</text>
</comment>
<comment type="catalytic activity">
    <reaction evidence="1">
        <text>tRNA(Ile) + L-isoleucine + ATP = L-isoleucyl-tRNA(Ile) + AMP + diphosphate</text>
        <dbReference type="Rhea" id="RHEA:11060"/>
        <dbReference type="Rhea" id="RHEA-COMP:9666"/>
        <dbReference type="Rhea" id="RHEA-COMP:9695"/>
        <dbReference type="ChEBI" id="CHEBI:30616"/>
        <dbReference type="ChEBI" id="CHEBI:33019"/>
        <dbReference type="ChEBI" id="CHEBI:58045"/>
        <dbReference type="ChEBI" id="CHEBI:78442"/>
        <dbReference type="ChEBI" id="CHEBI:78528"/>
        <dbReference type="ChEBI" id="CHEBI:456215"/>
        <dbReference type="EC" id="6.1.1.5"/>
    </reaction>
</comment>
<comment type="cofactor">
    <cofactor evidence="1">
        <name>Zn(2+)</name>
        <dbReference type="ChEBI" id="CHEBI:29105"/>
    </cofactor>
    <text evidence="1">Binds 1 zinc ion per subunit.</text>
</comment>
<comment type="subunit">
    <text evidence="1">Monomer.</text>
</comment>
<comment type="subcellular location">
    <subcellularLocation>
        <location evidence="1">Cytoplasm</location>
    </subcellularLocation>
</comment>
<comment type="domain">
    <text evidence="1">IleRS has two distinct active sites: one for aminoacylation and one for editing. The misactivated valine is translocated from the active site to the editing site, which sterically excludes the correctly activated isoleucine. The single editing site contains two valyl binding pockets, one specific for each substrate (Val-AMP or Val-tRNA(Ile)).</text>
</comment>
<comment type="similarity">
    <text evidence="1">Belongs to the class-I aminoacyl-tRNA synthetase family. IleS type 1 subfamily.</text>
</comment>
<name>SYI_AZOSB</name>
<gene>
    <name evidence="1" type="primary">ileS</name>
    <name type="ordered locus">azo1205</name>
</gene>
<accession>A1K4R7</accession>